<feature type="chain" id="PRO_0000407641" description="Methionine aminopeptidase 2">
    <location>
        <begin position="1"/>
        <end position="464"/>
    </location>
</feature>
<feature type="region of interest" description="Disordered" evidence="2">
    <location>
        <begin position="1"/>
        <end position="86"/>
    </location>
</feature>
<feature type="compositionally biased region" description="Acidic residues" evidence="2">
    <location>
        <begin position="43"/>
        <end position="54"/>
    </location>
</feature>
<feature type="compositionally biased region" description="Basic residues" evidence="2">
    <location>
        <begin position="72"/>
        <end position="83"/>
    </location>
</feature>
<feature type="binding site" evidence="1">
    <location>
        <position position="216"/>
    </location>
    <ligand>
        <name>substrate</name>
    </ligand>
</feature>
<feature type="binding site" evidence="1">
    <location>
        <position position="237"/>
    </location>
    <ligand>
        <name>a divalent metal cation</name>
        <dbReference type="ChEBI" id="CHEBI:60240"/>
        <label>1</label>
    </ligand>
</feature>
<feature type="binding site" evidence="1">
    <location>
        <position position="248"/>
    </location>
    <ligand>
        <name>a divalent metal cation</name>
        <dbReference type="ChEBI" id="CHEBI:60240"/>
        <label>1</label>
    </ligand>
</feature>
<feature type="binding site" evidence="1">
    <location>
        <position position="248"/>
    </location>
    <ligand>
        <name>a divalent metal cation</name>
        <dbReference type="ChEBI" id="CHEBI:60240"/>
        <label>2</label>
        <note>catalytic</note>
    </ligand>
</feature>
<feature type="binding site" evidence="1">
    <location>
        <position position="317"/>
    </location>
    <ligand>
        <name>a divalent metal cation</name>
        <dbReference type="ChEBI" id="CHEBI:60240"/>
        <label>2</label>
        <note>catalytic</note>
    </ligand>
</feature>
<feature type="binding site" evidence="1">
    <location>
        <position position="325"/>
    </location>
    <ligand>
        <name>substrate</name>
    </ligand>
</feature>
<feature type="binding site" evidence="1">
    <location>
        <position position="350"/>
    </location>
    <ligand>
        <name>a divalent metal cation</name>
        <dbReference type="ChEBI" id="CHEBI:60240"/>
        <label>2</label>
        <note>catalytic</note>
    </ligand>
</feature>
<feature type="binding site" evidence="1">
    <location>
        <position position="445"/>
    </location>
    <ligand>
        <name>a divalent metal cation</name>
        <dbReference type="ChEBI" id="CHEBI:60240"/>
        <label>1</label>
    </ligand>
</feature>
<feature type="binding site" evidence="1">
    <location>
        <position position="445"/>
    </location>
    <ligand>
        <name>a divalent metal cation</name>
        <dbReference type="ChEBI" id="CHEBI:60240"/>
        <label>2</label>
        <note>catalytic</note>
    </ligand>
</feature>
<accession>A6RGC8</accession>
<keyword id="KW-0031">Aminopeptidase</keyword>
<keyword id="KW-0963">Cytoplasm</keyword>
<keyword id="KW-0378">Hydrolase</keyword>
<keyword id="KW-0479">Metal-binding</keyword>
<keyword id="KW-0645">Protease</keyword>
<keyword id="KW-1185">Reference proteome</keyword>
<protein>
    <recommendedName>
        <fullName evidence="1">Methionine aminopeptidase 2</fullName>
        <shortName evidence="1">MAP 2</shortName>
        <shortName evidence="1">MetAP 2</shortName>
        <ecNumber evidence="1">3.4.11.18</ecNumber>
    </recommendedName>
    <alternativeName>
        <fullName evidence="1">Peptidase M</fullName>
    </alternativeName>
</protein>
<sequence>MGSKTPGNHRRGPNESSPHPAIDAINPPKQAAASRLVHSSLEGESEGGEDEDDDKPGADLKAVGQIGNNGQKRNKRRKKKKKNTKELEILQTTPPRVALANIFRSQRYPEAEIVKYSTDNDNLQRTTAEELRHISVLNAMDDEFLNDYRKAAEVHRQVRQYVQTIIKPGIALSQLAEEIEDGVRALTNHQGLETGDALKAGMAFPTGLCLNNIAAHWTPNPGAKEVILKYDDVLKIDFGVHVNGRIVDSAFTIAFNPVYDNLLAAVKDATNAGLKEAGIDARIAHISETIQNVMESYEVELNQKVIPVKAVRNITGHNVLHYKIHGDKQVPFVKTQTNQRMEEGDVFAIETFGSTGKAYLDDATGIYGYGYDENASTAGLHHSSAKSLLKTIKENFGTLVFSRRYLERLGVQRYHLGMRSLVTNGIVQSYAPLVDVPGSYVAQFEHTVLLRPNCKEVISRGDDY</sequence>
<reference key="1">
    <citation type="journal article" date="2009" name="Genome Res.">
        <title>Comparative genomic analyses of the human fungal pathogens Coccidioides and their relatives.</title>
        <authorList>
            <person name="Sharpton T.J."/>
            <person name="Stajich J.E."/>
            <person name="Rounsley S.D."/>
            <person name="Gardner M.J."/>
            <person name="Wortman J.R."/>
            <person name="Jordar V.S."/>
            <person name="Maiti R."/>
            <person name="Kodira C.D."/>
            <person name="Neafsey D.E."/>
            <person name="Zeng Q."/>
            <person name="Hung C.-Y."/>
            <person name="McMahan C."/>
            <person name="Muszewska A."/>
            <person name="Grynberg M."/>
            <person name="Mandel M.A."/>
            <person name="Kellner E.M."/>
            <person name="Barker B.M."/>
            <person name="Galgiani J.N."/>
            <person name="Orbach M.J."/>
            <person name="Kirkland T.N."/>
            <person name="Cole G.T."/>
            <person name="Henn M.R."/>
            <person name="Birren B.W."/>
            <person name="Taylor J.W."/>
        </authorList>
    </citation>
    <scope>NUCLEOTIDE SEQUENCE [LARGE SCALE GENOMIC DNA]</scope>
    <source>
        <strain>NAm1 / WU24</strain>
    </source>
</reference>
<organism>
    <name type="scientific">Ajellomyces capsulatus (strain NAm1 / WU24)</name>
    <name type="common">Darling's disease fungus</name>
    <name type="synonym">Histoplasma capsulatum</name>
    <dbReference type="NCBI Taxonomy" id="2059318"/>
    <lineage>
        <taxon>Eukaryota</taxon>
        <taxon>Fungi</taxon>
        <taxon>Dikarya</taxon>
        <taxon>Ascomycota</taxon>
        <taxon>Pezizomycotina</taxon>
        <taxon>Eurotiomycetes</taxon>
        <taxon>Eurotiomycetidae</taxon>
        <taxon>Onygenales</taxon>
        <taxon>Ajellomycetaceae</taxon>
        <taxon>Histoplasma</taxon>
    </lineage>
</organism>
<evidence type="ECO:0000255" key="1">
    <source>
        <dbReference type="HAMAP-Rule" id="MF_03175"/>
    </source>
</evidence>
<evidence type="ECO:0000256" key="2">
    <source>
        <dbReference type="SAM" id="MobiDB-lite"/>
    </source>
</evidence>
<name>MAP2_AJECN</name>
<comment type="function">
    <text evidence="1">Cotranslationally removes the N-terminal methionine from nascent proteins. The N-terminal methionine is often cleaved when the second residue in the primary sequence is small and uncharged (Met-Ala-, Cys, Gly, Pro, Ser, Thr, or Val).</text>
</comment>
<comment type="catalytic activity">
    <reaction evidence="1">
        <text>Release of N-terminal amino acids, preferentially methionine, from peptides and arylamides.</text>
        <dbReference type="EC" id="3.4.11.18"/>
    </reaction>
</comment>
<comment type="cofactor">
    <cofactor evidence="1">
        <name>Co(2+)</name>
        <dbReference type="ChEBI" id="CHEBI:48828"/>
    </cofactor>
    <cofactor evidence="1">
        <name>Zn(2+)</name>
        <dbReference type="ChEBI" id="CHEBI:29105"/>
    </cofactor>
    <cofactor evidence="1">
        <name>Mn(2+)</name>
        <dbReference type="ChEBI" id="CHEBI:29035"/>
    </cofactor>
    <cofactor evidence="1">
        <name>Fe(2+)</name>
        <dbReference type="ChEBI" id="CHEBI:29033"/>
    </cofactor>
    <text evidence="1">Binds 2 divalent metal cations per subunit. Has a high-affinity and a low affinity metal-binding site. The true nature of the physiological cofactor is under debate. The enzyme is active with cobalt, zinc, manganese or divalent iron ions. Most likely, methionine aminopeptidases function as mononuclear Fe(2+)-metalloproteases under physiological conditions, and the catalytically relevant metal-binding site has been assigned to the histidine-containing high-affinity site.</text>
</comment>
<comment type="subcellular location">
    <subcellularLocation>
        <location evidence="1">Cytoplasm</location>
    </subcellularLocation>
</comment>
<comment type="similarity">
    <text evidence="1">Belongs to the peptidase M24A family. Methionine aminopeptidase eukaryotic type 2 subfamily.</text>
</comment>
<proteinExistence type="inferred from homology"/>
<dbReference type="EC" id="3.4.11.18" evidence="1"/>
<dbReference type="EMBL" id="CH476666">
    <property type="protein sequence ID" value="EDN05040.1"/>
    <property type="molecule type" value="Genomic_DNA"/>
</dbReference>
<dbReference type="RefSeq" id="XP_001536373.1">
    <property type="nucleotide sequence ID" value="XM_001536323.1"/>
</dbReference>
<dbReference type="SMR" id="A6RGC8"/>
<dbReference type="STRING" id="339724.A6RGC8"/>
<dbReference type="GeneID" id="5442741"/>
<dbReference type="KEGG" id="aje:HCAG_08694"/>
<dbReference type="VEuPathDB" id="FungiDB:HCAG_08694"/>
<dbReference type="HOGENOM" id="CLU_015857_7_1_1"/>
<dbReference type="OMA" id="ILRYHIH"/>
<dbReference type="OrthoDB" id="6078at299071"/>
<dbReference type="Proteomes" id="UP000009297">
    <property type="component" value="Unassembled WGS sequence"/>
</dbReference>
<dbReference type="GO" id="GO:0005737">
    <property type="term" value="C:cytoplasm"/>
    <property type="evidence" value="ECO:0007669"/>
    <property type="project" value="UniProtKB-SubCell"/>
</dbReference>
<dbReference type="GO" id="GO:0004239">
    <property type="term" value="F:initiator methionyl aminopeptidase activity"/>
    <property type="evidence" value="ECO:0007669"/>
    <property type="project" value="UniProtKB-UniRule"/>
</dbReference>
<dbReference type="GO" id="GO:0046872">
    <property type="term" value="F:metal ion binding"/>
    <property type="evidence" value="ECO:0007669"/>
    <property type="project" value="UniProtKB-UniRule"/>
</dbReference>
<dbReference type="GO" id="GO:0070006">
    <property type="term" value="F:metalloaminopeptidase activity"/>
    <property type="evidence" value="ECO:0007669"/>
    <property type="project" value="UniProtKB-UniRule"/>
</dbReference>
<dbReference type="GO" id="GO:0006508">
    <property type="term" value="P:proteolysis"/>
    <property type="evidence" value="ECO:0007669"/>
    <property type="project" value="UniProtKB-KW"/>
</dbReference>
<dbReference type="CDD" id="cd01088">
    <property type="entry name" value="MetAP2"/>
    <property type="match status" value="1"/>
</dbReference>
<dbReference type="Gene3D" id="3.90.230.10">
    <property type="entry name" value="Creatinase/methionine aminopeptidase superfamily"/>
    <property type="match status" value="1"/>
</dbReference>
<dbReference type="Gene3D" id="1.10.10.10">
    <property type="entry name" value="Winged helix-like DNA-binding domain superfamily/Winged helix DNA-binding domain"/>
    <property type="match status" value="1"/>
</dbReference>
<dbReference type="HAMAP" id="MF_03175">
    <property type="entry name" value="MetAP_2_euk"/>
    <property type="match status" value="1"/>
</dbReference>
<dbReference type="InterPro" id="IPR036005">
    <property type="entry name" value="Creatinase/aminopeptidase-like"/>
</dbReference>
<dbReference type="InterPro" id="IPR050247">
    <property type="entry name" value="Met_Aminopeptidase_Type2"/>
</dbReference>
<dbReference type="InterPro" id="IPR000994">
    <property type="entry name" value="Pept_M24"/>
</dbReference>
<dbReference type="InterPro" id="IPR001714">
    <property type="entry name" value="Pept_M24_MAP"/>
</dbReference>
<dbReference type="InterPro" id="IPR002468">
    <property type="entry name" value="Pept_M24A_MAP2"/>
</dbReference>
<dbReference type="InterPro" id="IPR018349">
    <property type="entry name" value="Pept_M24A_MAP2_BS"/>
</dbReference>
<dbReference type="InterPro" id="IPR036388">
    <property type="entry name" value="WH-like_DNA-bd_sf"/>
</dbReference>
<dbReference type="InterPro" id="IPR036390">
    <property type="entry name" value="WH_DNA-bd_sf"/>
</dbReference>
<dbReference type="NCBIfam" id="TIGR00501">
    <property type="entry name" value="met_pdase_II"/>
    <property type="match status" value="1"/>
</dbReference>
<dbReference type="PANTHER" id="PTHR45777">
    <property type="entry name" value="METHIONINE AMINOPEPTIDASE 2"/>
    <property type="match status" value="1"/>
</dbReference>
<dbReference type="PANTHER" id="PTHR45777:SF1">
    <property type="entry name" value="METHIONINE AMINOPEPTIDASE 2-2"/>
    <property type="match status" value="1"/>
</dbReference>
<dbReference type="Pfam" id="PF00557">
    <property type="entry name" value="Peptidase_M24"/>
    <property type="match status" value="1"/>
</dbReference>
<dbReference type="PRINTS" id="PR00599">
    <property type="entry name" value="MAPEPTIDASE"/>
</dbReference>
<dbReference type="SUPFAM" id="SSF55920">
    <property type="entry name" value="Creatinase/aminopeptidase"/>
    <property type="match status" value="1"/>
</dbReference>
<dbReference type="SUPFAM" id="SSF46785">
    <property type="entry name" value="Winged helix' DNA-binding domain"/>
    <property type="match status" value="1"/>
</dbReference>
<dbReference type="PROSITE" id="PS01202">
    <property type="entry name" value="MAP_2"/>
    <property type="match status" value="1"/>
</dbReference>
<gene>
    <name type="ORF">HCAG_08694</name>
</gene>